<name>TRHO_ECO57</name>
<evidence type="ECO:0000250" key="1">
    <source>
        <dbReference type="UniProtKB" id="P24188"/>
    </source>
</evidence>
<evidence type="ECO:0000255" key="2">
    <source>
        <dbReference type="HAMAP-Rule" id="MF_00469"/>
    </source>
</evidence>
<gene>
    <name evidence="2" type="primary">trhO</name>
    <name type="synonym">yceA</name>
    <name type="ordered locus">Z1691</name>
    <name type="ordered locus">ECs1433</name>
</gene>
<reference key="1">
    <citation type="journal article" date="2001" name="Nature">
        <title>Genome sequence of enterohaemorrhagic Escherichia coli O157:H7.</title>
        <authorList>
            <person name="Perna N.T."/>
            <person name="Plunkett G. III"/>
            <person name="Burland V."/>
            <person name="Mau B."/>
            <person name="Glasner J.D."/>
            <person name="Rose D.J."/>
            <person name="Mayhew G.F."/>
            <person name="Evans P.S."/>
            <person name="Gregor J."/>
            <person name="Kirkpatrick H.A."/>
            <person name="Posfai G."/>
            <person name="Hackett J."/>
            <person name="Klink S."/>
            <person name="Boutin A."/>
            <person name="Shao Y."/>
            <person name="Miller L."/>
            <person name="Grotbeck E.J."/>
            <person name="Davis N.W."/>
            <person name="Lim A."/>
            <person name="Dimalanta E.T."/>
            <person name="Potamousis K."/>
            <person name="Apodaca J."/>
            <person name="Anantharaman T.S."/>
            <person name="Lin J."/>
            <person name="Yen G."/>
            <person name="Schwartz D.C."/>
            <person name="Welch R.A."/>
            <person name="Blattner F.R."/>
        </authorList>
    </citation>
    <scope>NUCLEOTIDE SEQUENCE [LARGE SCALE GENOMIC DNA]</scope>
    <source>
        <strain>O157:H7 / EDL933 / ATCC 700927 / EHEC</strain>
    </source>
</reference>
<reference key="2">
    <citation type="journal article" date="2001" name="DNA Res.">
        <title>Complete genome sequence of enterohemorrhagic Escherichia coli O157:H7 and genomic comparison with a laboratory strain K-12.</title>
        <authorList>
            <person name="Hayashi T."/>
            <person name="Makino K."/>
            <person name="Ohnishi M."/>
            <person name="Kurokawa K."/>
            <person name="Ishii K."/>
            <person name="Yokoyama K."/>
            <person name="Han C.-G."/>
            <person name="Ohtsubo E."/>
            <person name="Nakayama K."/>
            <person name="Murata T."/>
            <person name="Tanaka M."/>
            <person name="Tobe T."/>
            <person name="Iida T."/>
            <person name="Takami H."/>
            <person name="Honda T."/>
            <person name="Sasakawa C."/>
            <person name="Ogasawara N."/>
            <person name="Yasunaga T."/>
            <person name="Kuhara S."/>
            <person name="Shiba T."/>
            <person name="Hattori M."/>
            <person name="Shinagawa H."/>
        </authorList>
    </citation>
    <scope>NUCLEOTIDE SEQUENCE [LARGE SCALE GENOMIC DNA]</scope>
    <source>
        <strain>O157:H7 / Sakai / RIMD 0509952 / EHEC</strain>
    </source>
</reference>
<dbReference type="EC" id="1.14.-.-" evidence="2"/>
<dbReference type="EMBL" id="AE005174">
    <property type="protein sequence ID" value="AAG55801.1"/>
    <property type="molecule type" value="Genomic_DNA"/>
</dbReference>
<dbReference type="EMBL" id="BA000007">
    <property type="protein sequence ID" value="BAB34856.1"/>
    <property type="molecule type" value="Genomic_DNA"/>
</dbReference>
<dbReference type="PIR" id="A99808">
    <property type="entry name" value="A99808"/>
</dbReference>
<dbReference type="PIR" id="E85667">
    <property type="entry name" value="E85667"/>
</dbReference>
<dbReference type="RefSeq" id="NP_309460.1">
    <property type="nucleotide sequence ID" value="NC_002695.1"/>
</dbReference>
<dbReference type="RefSeq" id="WP_001301877.1">
    <property type="nucleotide sequence ID" value="NZ_VOAI01000018.1"/>
</dbReference>
<dbReference type="SMR" id="Q8X8P2"/>
<dbReference type="STRING" id="155864.Z1691"/>
<dbReference type="GeneID" id="913919"/>
<dbReference type="KEGG" id="ece:Z1691"/>
<dbReference type="KEGG" id="ecs:ECs_1433"/>
<dbReference type="PATRIC" id="fig|386585.9.peg.1534"/>
<dbReference type="eggNOG" id="COG1054">
    <property type="taxonomic scope" value="Bacteria"/>
</dbReference>
<dbReference type="HOGENOM" id="CLU_038878_1_1_6"/>
<dbReference type="OMA" id="CDTHTNC"/>
<dbReference type="Proteomes" id="UP000000558">
    <property type="component" value="Chromosome"/>
</dbReference>
<dbReference type="Proteomes" id="UP000002519">
    <property type="component" value="Chromosome"/>
</dbReference>
<dbReference type="GO" id="GO:0016705">
    <property type="term" value="F:oxidoreductase activity, acting on paired donors, with incorporation or reduction of molecular oxygen"/>
    <property type="evidence" value="ECO:0007669"/>
    <property type="project" value="UniProtKB-UniRule"/>
</dbReference>
<dbReference type="GO" id="GO:0006400">
    <property type="term" value="P:tRNA modification"/>
    <property type="evidence" value="ECO:0007669"/>
    <property type="project" value="UniProtKB-UniRule"/>
</dbReference>
<dbReference type="CDD" id="cd01518">
    <property type="entry name" value="RHOD_YceA"/>
    <property type="match status" value="1"/>
</dbReference>
<dbReference type="Gene3D" id="3.30.70.100">
    <property type="match status" value="1"/>
</dbReference>
<dbReference type="Gene3D" id="3.40.250.10">
    <property type="entry name" value="Rhodanese-like domain"/>
    <property type="match status" value="1"/>
</dbReference>
<dbReference type="HAMAP" id="MF_00469">
    <property type="entry name" value="TrhO"/>
    <property type="match status" value="1"/>
</dbReference>
<dbReference type="InterPro" id="IPR001763">
    <property type="entry name" value="Rhodanese-like_dom"/>
</dbReference>
<dbReference type="InterPro" id="IPR036873">
    <property type="entry name" value="Rhodanese-like_dom_sf"/>
</dbReference>
<dbReference type="InterPro" id="IPR022111">
    <property type="entry name" value="Rhodanese_C"/>
</dbReference>
<dbReference type="InterPro" id="IPR020936">
    <property type="entry name" value="TrhO"/>
</dbReference>
<dbReference type="InterPro" id="IPR040503">
    <property type="entry name" value="TRHO_N"/>
</dbReference>
<dbReference type="NCBIfam" id="NF001133">
    <property type="entry name" value="PRK00142.1-1"/>
    <property type="match status" value="1"/>
</dbReference>
<dbReference type="PANTHER" id="PTHR43846:SF1">
    <property type="entry name" value="TRNA URIDINE(34) HYDROXYLASE"/>
    <property type="match status" value="1"/>
</dbReference>
<dbReference type="PANTHER" id="PTHR43846">
    <property type="entry name" value="UPF0176 PROTEIN YCEA"/>
    <property type="match status" value="1"/>
</dbReference>
<dbReference type="Pfam" id="PF00581">
    <property type="entry name" value="Rhodanese"/>
    <property type="match status" value="1"/>
</dbReference>
<dbReference type="Pfam" id="PF12368">
    <property type="entry name" value="Rhodanese_C"/>
    <property type="match status" value="1"/>
</dbReference>
<dbReference type="Pfam" id="PF17773">
    <property type="entry name" value="UPF0176_N"/>
    <property type="match status" value="1"/>
</dbReference>
<dbReference type="SMART" id="SM00450">
    <property type="entry name" value="RHOD"/>
    <property type="match status" value="1"/>
</dbReference>
<dbReference type="SUPFAM" id="SSF52821">
    <property type="entry name" value="Rhodanese/Cell cycle control phosphatase"/>
    <property type="match status" value="1"/>
</dbReference>
<dbReference type="PROSITE" id="PS50206">
    <property type="entry name" value="RHODANESE_3"/>
    <property type="match status" value="1"/>
</dbReference>
<comment type="function">
    <text evidence="1">Catalyzes oxygen-dependent 5-hydroxyuridine (ho5U) modification at position 34 in tRNAs, the first step in 5-carboxymethoxyuridine (cmo5U) biosynthesis. May be part of an alternate pathway, which is able to bypass cmo5U biogenesis in a subset of tRNAs under aerobic conditions.</text>
</comment>
<comment type="catalytic activity">
    <reaction evidence="2">
        <text>uridine(34) in tRNA + AH2 + O2 = 5-hydroxyuridine(34) in tRNA + A + H2O</text>
        <dbReference type="Rhea" id="RHEA:64224"/>
        <dbReference type="Rhea" id="RHEA-COMP:11727"/>
        <dbReference type="Rhea" id="RHEA-COMP:13381"/>
        <dbReference type="ChEBI" id="CHEBI:13193"/>
        <dbReference type="ChEBI" id="CHEBI:15377"/>
        <dbReference type="ChEBI" id="CHEBI:15379"/>
        <dbReference type="ChEBI" id="CHEBI:17499"/>
        <dbReference type="ChEBI" id="CHEBI:65315"/>
        <dbReference type="ChEBI" id="CHEBI:136877"/>
    </reaction>
</comment>
<comment type="similarity">
    <text evidence="2">Belongs to the TrhO family.</text>
</comment>
<accession>Q8X8P2</accession>
<feature type="chain" id="PRO_0000161472" description="tRNA uridine(34) hydroxylase">
    <location>
        <begin position="1"/>
        <end position="350"/>
    </location>
</feature>
<feature type="domain" description="Rhodanese" evidence="2">
    <location>
        <begin position="146"/>
        <end position="240"/>
    </location>
</feature>
<feature type="active site" description="Cysteine persulfide intermediate" evidence="2">
    <location>
        <position position="200"/>
    </location>
</feature>
<sequence>MPVLHNRISNDALKAKMLAESEPRTTISFYKYFHIADPKATRDALYQLFTALNVFGRVYLAHEGINAQISVPASNVKTFRAQLYAFDSALDGLRLNIALDDDGKSFWVLRMKVRDRIVADGIDDPHFDASNVGEYLQAAEVNAMLDDPDALFIDMRNHYEYEVGHFENALEIPADTFREQLPKAVEMMQAHKDKKIVMYCTGGIRCEKASAWMKHNGFNKVWHIEGGIIEYARKAREQGLPVRFIGKNFVFDERMGERISDEIIAHCHQCGAPCDSHTNCKNDGCHLLFIQCPVCAEKYKGCCSEICCEESALPPEEQRRRRAGRENGNKIFNKSRGRLNTTLGIPDPTE</sequence>
<keyword id="KW-0560">Oxidoreductase</keyword>
<keyword id="KW-1185">Reference proteome</keyword>
<keyword id="KW-0819">tRNA processing</keyword>
<proteinExistence type="inferred from homology"/>
<protein>
    <recommendedName>
        <fullName evidence="2">tRNA uridine(34) hydroxylase</fullName>
        <ecNumber evidence="2">1.14.-.-</ecNumber>
    </recommendedName>
    <alternativeName>
        <fullName evidence="2">tRNA hydroxylation protein O</fullName>
    </alternativeName>
</protein>
<organism>
    <name type="scientific">Escherichia coli O157:H7</name>
    <dbReference type="NCBI Taxonomy" id="83334"/>
    <lineage>
        <taxon>Bacteria</taxon>
        <taxon>Pseudomonadati</taxon>
        <taxon>Pseudomonadota</taxon>
        <taxon>Gammaproteobacteria</taxon>
        <taxon>Enterobacterales</taxon>
        <taxon>Enterobacteriaceae</taxon>
        <taxon>Escherichia</taxon>
    </lineage>
</organism>